<accession>Q9W3N6</accession>
<accession>Q9NFR8</accession>
<reference evidence="8" key="1">
    <citation type="journal article" date="2001" name="Mol. Biol. Cell">
        <title>Biogenesis of Golgi stacks in imaginal discs of Drosophila melanogaster.</title>
        <authorList>
            <person name="Kondylis V."/>
            <person name="Goulding S.E."/>
            <person name="Dunne J.C."/>
            <person name="Rabouille C."/>
        </authorList>
    </citation>
    <scope>NUCLEOTIDE SEQUENCE [MRNA]</scope>
    <scope>SUBCELLULAR LOCATION</scope>
    <scope>DEVELOPMENTAL STAGE</scope>
</reference>
<reference key="2">
    <citation type="journal article" date="2000" name="Science">
        <title>The genome sequence of Drosophila melanogaster.</title>
        <authorList>
            <person name="Adams M.D."/>
            <person name="Celniker S.E."/>
            <person name="Holt R.A."/>
            <person name="Evans C.A."/>
            <person name="Gocayne J.D."/>
            <person name="Amanatides P.G."/>
            <person name="Scherer S.E."/>
            <person name="Li P.W."/>
            <person name="Hoskins R.A."/>
            <person name="Galle R.F."/>
            <person name="George R.A."/>
            <person name="Lewis S.E."/>
            <person name="Richards S."/>
            <person name="Ashburner M."/>
            <person name="Henderson S.N."/>
            <person name="Sutton G.G."/>
            <person name="Wortman J.R."/>
            <person name="Yandell M.D."/>
            <person name="Zhang Q."/>
            <person name="Chen L.X."/>
            <person name="Brandon R.C."/>
            <person name="Rogers Y.-H.C."/>
            <person name="Blazej R.G."/>
            <person name="Champe M."/>
            <person name="Pfeiffer B.D."/>
            <person name="Wan K.H."/>
            <person name="Doyle C."/>
            <person name="Baxter E.G."/>
            <person name="Helt G."/>
            <person name="Nelson C.R."/>
            <person name="Miklos G.L.G."/>
            <person name="Abril J.F."/>
            <person name="Agbayani A."/>
            <person name="An H.-J."/>
            <person name="Andrews-Pfannkoch C."/>
            <person name="Baldwin D."/>
            <person name="Ballew R.M."/>
            <person name="Basu A."/>
            <person name="Baxendale J."/>
            <person name="Bayraktaroglu L."/>
            <person name="Beasley E.M."/>
            <person name="Beeson K.Y."/>
            <person name="Benos P.V."/>
            <person name="Berman B.P."/>
            <person name="Bhandari D."/>
            <person name="Bolshakov S."/>
            <person name="Borkova D."/>
            <person name="Botchan M.R."/>
            <person name="Bouck J."/>
            <person name="Brokstein P."/>
            <person name="Brottier P."/>
            <person name="Burtis K.C."/>
            <person name="Busam D.A."/>
            <person name="Butler H."/>
            <person name="Cadieu E."/>
            <person name="Center A."/>
            <person name="Chandra I."/>
            <person name="Cherry J.M."/>
            <person name="Cawley S."/>
            <person name="Dahlke C."/>
            <person name="Davenport L.B."/>
            <person name="Davies P."/>
            <person name="de Pablos B."/>
            <person name="Delcher A."/>
            <person name="Deng Z."/>
            <person name="Mays A.D."/>
            <person name="Dew I."/>
            <person name="Dietz S.M."/>
            <person name="Dodson K."/>
            <person name="Doup L.E."/>
            <person name="Downes M."/>
            <person name="Dugan-Rocha S."/>
            <person name="Dunkov B.C."/>
            <person name="Dunn P."/>
            <person name="Durbin K.J."/>
            <person name="Evangelista C.C."/>
            <person name="Ferraz C."/>
            <person name="Ferriera S."/>
            <person name="Fleischmann W."/>
            <person name="Fosler C."/>
            <person name="Gabrielian A.E."/>
            <person name="Garg N.S."/>
            <person name="Gelbart W.M."/>
            <person name="Glasser K."/>
            <person name="Glodek A."/>
            <person name="Gong F."/>
            <person name="Gorrell J.H."/>
            <person name="Gu Z."/>
            <person name="Guan P."/>
            <person name="Harris M."/>
            <person name="Harris N.L."/>
            <person name="Harvey D.A."/>
            <person name="Heiman T.J."/>
            <person name="Hernandez J.R."/>
            <person name="Houck J."/>
            <person name="Hostin D."/>
            <person name="Houston K.A."/>
            <person name="Howland T.J."/>
            <person name="Wei M.-H."/>
            <person name="Ibegwam C."/>
            <person name="Jalali M."/>
            <person name="Kalush F."/>
            <person name="Karpen G.H."/>
            <person name="Ke Z."/>
            <person name="Kennison J.A."/>
            <person name="Ketchum K.A."/>
            <person name="Kimmel B.E."/>
            <person name="Kodira C.D."/>
            <person name="Kraft C.L."/>
            <person name="Kravitz S."/>
            <person name="Kulp D."/>
            <person name="Lai Z."/>
            <person name="Lasko P."/>
            <person name="Lei Y."/>
            <person name="Levitsky A.A."/>
            <person name="Li J.H."/>
            <person name="Li Z."/>
            <person name="Liang Y."/>
            <person name="Lin X."/>
            <person name="Liu X."/>
            <person name="Mattei B."/>
            <person name="McIntosh T.C."/>
            <person name="McLeod M.P."/>
            <person name="McPherson D."/>
            <person name="Merkulov G."/>
            <person name="Milshina N.V."/>
            <person name="Mobarry C."/>
            <person name="Morris J."/>
            <person name="Moshrefi A."/>
            <person name="Mount S.M."/>
            <person name="Moy M."/>
            <person name="Murphy B."/>
            <person name="Murphy L."/>
            <person name="Muzny D.M."/>
            <person name="Nelson D.L."/>
            <person name="Nelson D.R."/>
            <person name="Nelson K.A."/>
            <person name="Nixon K."/>
            <person name="Nusskern D.R."/>
            <person name="Pacleb J.M."/>
            <person name="Palazzolo M."/>
            <person name="Pittman G.S."/>
            <person name="Pan S."/>
            <person name="Pollard J."/>
            <person name="Puri V."/>
            <person name="Reese M.G."/>
            <person name="Reinert K."/>
            <person name="Remington K."/>
            <person name="Saunders R.D.C."/>
            <person name="Scheeler F."/>
            <person name="Shen H."/>
            <person name="Shue B.C."/>
            <person name="Siden-Kiamos I."/>
            <person name="Simpson M."/>
            <person name="Skupski M.P."/>
            <person name="Smith T.J."/>
            <person name="Spier E."/>
            <person name="Spradling A.C."/>
            <person name="Stapleton M."/>
            <person name="Strong R."/>
            <person name="Sun E."/>
            <person name="Svirskas R."/>
            <person name="Tector C."/>
            <person name="Turner R."/>
            <person name="Venter E."/>
            <person name="Wang A.H."/>
            <person name="Wang X."/>
            <person name="Wang Z.-Y."/>
            <person name="Wassarman D.A."/>
            <person name="Weinstock G.M."/>
            <person name="Weissenbach J."/>
            <person name="Williams S.M."/>
            <person name="Woodage T."/>
            <person name="Worley K.C."/>
            <person name="Wu D."/>
            <person name="Yang S."/>
            <person name="Yao Q.A."/>
            <person name="Ye J."/>
            <person name="Yeh R.-F."/>
            <person name="Zaveri J.S."/>
            <person name="Zhan M."/>
            <person name="Zhang G."/>
            <person name="Zhao Q."/>
            <person name="Zheng L."/>
            <person name="Zheng X.H."/>
            <person name="Zhong F.N."/>
            <person name="Zhong W."/>
            <person name="Zhou X."/>
            <person name="Zhu S.C."/>
            <person name="Zhu X."/>
            <person name="Smith H.O."/>
            <person name="Gibbs R.A."/>
            <person name="Myers E.W."/>
            <person name="Rubin G.M."/>
            <person name="Venter J.C."/>
        </authorList>
    </citation>
    <scope>NUCLEOTIDE SEQUENCE [LARGE SCALE GENOMIC DNA]</scope>
    <source>
        <strain>Berkeley</strain>
    </source>
</reference>
<reference evidence="10" key="3">
    <citation type="journal article" date="2002" name="Genome Biol.">
        <title>Annotation of the Drosophila melanogaster euchromatic genome: a systematic review.</title>
        <authorList>
            <person name="Misra S."/>
            <person name="Crosby M.A."/>
            <person name="Mungall C.J."/>
            <person name="Matthews B.B."/>
            <person name="Campbell K.S."/>
            <person name="Hradecky P."/>
            <person name="Huang Y."/>
            <person name="Kaminker J.S."/>
            <person name="Millburn G.H."/>
            <person name="Prochnik S.E."/>
            <person name="Smith C.D."/>
            <person name="Tupy J.L."/>
            <person name="Whitfield E.J."/>
            <person name="Bayraktaroglu L."/>
            <person name="Berman B.P."/>
            <person name="Bettencourt B.R."/>
            <person name="Celniker S.E."/>
            <person name="de Grey A.D.N.J."/>
            <person name="Drysdale R.A."/>
            <person name="Harris N.L."/>
            <person name="Richter J."/>
            <person name="Russo S."/>
            <person name="Schroeder A.J."/>
            <person name="Shu S.Q."/>
            <person name="Stapleton M."/>
            <person name="Yamada C."/>
            <person name="Ashburner M."/>
            <person name="Gelbart W.M."/>
            <person name="Rubin G.M."/>
            <person name="Lewis S.E."/>
        </authorList>
    </citation>
    <scope>GENOME REANNOTATION</scope>
    <source>
        <strain evidence="10">Berkeley</strain>
    </source>
</reference>
<reference evidence="7" key="4">
    <citation type="journal article" date="2002" name="Genome Biol.">
        <title>A Drosophila full-length cDNA resource.</title>
        <authorList>
            <person name="Stapleton M."/>
            <person name="Carlson J.W."/>
            <person name="Brokstein P."/>
            <person name="Yu C."/>
            <person name="Champe M."/>
            <person name="George R.A."/>
            <person name="Guarin H."/>
            <person name="Kronmiller B."/>
            <person name="Pacleb J.M."/>
            <person name="Park S."/>
            <person name="Wan K.H."/>
            <person name="Rubin G.M."/>
            <person name="Celniker S.E."/>
        </authorList>
    </citation>
    <scope>NUCLEOTIDE SEQUENCE [LARGE SCALE MRNA]</scope>
    <source>
        <strain evidence="7">Berkeley</strain>
        <tissue evidence="7">Embryo</tissue>
    </source>
</reference>
<reference evidence="6" key="5">
    <citation type="journal article" date="2003" name="J. Cell Biol.">
        <title>A novel role for dp115 in the organization of tER sites in Drosophila.</title>
        <authorList>
            <person name="Kondylis V."/>
            <person name="Rabouille C."/>
        </authorList>
    </citation>
    <scope>FUNCTION</scope>
    <scope>SUBCELLULAR LOCATION</scope>
    <scope>DEVELOPMENTAL STAGE</scope>
    <scope>DISRUPTION PHENOTYPE</scope>
</reference>
<keyword id="KW-0175">Coiled coil</keyword>
<keyword id="KW-0963">Cytoplasm</keyword>
<keyword id="KW-0256">Endoplasmic reticulum</keyword>
<keyword id="KW-0333">Golgi apparatus</keyword>
<keyword id="KW-0472">Membrane</keyword>
<keyword id="KW-1185">Reference proteome</keyword>
<keyword id="KW-0677">Repeat</keyword>
<proteinExistence type="evidence at protein level"/>
<name>USO1_DROME</name>
<gene>
    <name evidence="9" type="primary">p115</name>
    <name evidence="9" type="ORF">CG1422</name>
</gene>
<sequence>MEFLKSGIKTVLGSTEPGQQPSAAETVEKLVDRVYSSTLLEDRRDACRALKALSRKYRIEVGAQGMPPLVQVLQNDGQDAEIISYALDTLCNVVTSEEFDEEADNPTVSVNVGEQFTEMFIKTPEHVTLVMGYLDEYDFRVRRAAIQLITSLISNKTRELQDLILVSPMGVSKLMDLLTDSREVIRNDVLLLLIELTKGNSNIQKIVAFENAFDRLFEIVREEGCSDGGIVVEDCLILLLNLLKNNSSNQQFFKEGSYIQRLSPMFELSQDAEEVGWSPQKVSNFHCLLQVVRALVTPSNQQQVVAACQRVMQKSRLLHALCEILMSSGVPADILTETINAVAEVVRGDRDNQDELGRVMAPSSPPRPAIVVLLMSMINEKQLLALRCAVLYCFECFLYRNADGQRAVVQTLLPSSASDVSALSTGQLLCTGLFSTDALANWFSAVALMHSLVENVALKEELLRVLLATPGGQKPITLLEQCTNLMQQERYRLQSKVGLLMLLSLWLAHCPGAVKALLETQGTMAYLTAQLCSNEHDEREFLVQGMCAFLMGLCIQFNDNSLPGQKREDISQLIIKRIGQESFCSKLAEVSRHEAYSRACKQAQIRAKSAGELLLDFEYCKLYKGLEALIAKLVSGFDVDGIELTELTLSSEASALVSQYKGIIRGMDAQIQALQQSSKELEQENAELKEKLGEEQSLKAQLLDQNTLLKAQLGASTGQVQSAQGAEATPPNEEELNAARYQANMYFAENIRLTKELETLRQQLSAEKQSADAAQDSLAAMQKDQEDLLELLADQEAKLTRYEEAGSTNTLPTSNVAPSVPAAGGGSPIPSGTASR</sequence>
<evidence type="ECO:0000250" key="1">
    <source>
        <dbReference type="UniProtKB" id="P41541"/>
    </source>
</evidence>
<evidence type="ECO:0000255" key="2"/>
<evidence type="ECO:0000256" key="3">
    <source>
        <dbReference type="SAM" id="MobiDB-lite"/>
    </source>
</evidence>
<evidence type="ECO:0000269" key="4">
    <source>
    </source>
</evidence>
<evidence type="ECO:0000269" key="5">
    <source>
    </source>
</evidence>
<evidence type="ECO:0000305" key="6"/>
<evidence type="ECO:0000312" key="7">
    <source>
        <dbReference type="EMBL" id="AAL13980.1"/>
    </source>
</evidence>
<evidence type="ECO:0000312" key="8">
    <source>
        <dbReference type="EMBL" id="CAB72935.1"/>
    </source>
</evidence>
<evidence type="ECO:0000312" key="9">
    <source>
        <dbReference type="FlyBase" id="FBgn0040087"/>
    </source>
</evidence>
<evidence type="ECO:0000312" key="10">
    <source>
        <dbReference type="Proteomes" id="UP000000803"/>
    </source>
</evidence>
<comment type="function">
    <text evidence="5">Essential for maintaining the architecture of the Golgi stacks and for normal organization of the transitional endoplasmic reticulum (tER). Required for both the formation of the Golgi stacks and the maintenance of the individual cisternae.</text>
</comment>
<comment type="subcellular location">
    <subcellularLocation>
        <location evidence="5">Cytoplasm</location>
    </subcellularLocation>
    <subcellularLocation>
        <location evidence="4 5">Golgi apparatus</location>
        <location evidence="4 5">Golgi stack</location>
    </subcellularLocation>
    <subcellularLocation>
        <location evidence="4 5">Golgi apparatus</location>
        <location evidence="4 5">Golgi stack membrane</location>
        <topology evidence="4 5">Peripheral membrane protein</topology>
    </subcellularLocation>
    <subcellularLocation>
        <location evidence="4 5">Endoplasmic reticulum</location>
    </subcellularLocation>
    <subcellularLocation>
        <location evidence="5">Endoplasmic reticulum membrane</location>
        <topology evidence="5">Peripheral membrane protein</topology>
    </subcellularLocation>
    <text evidence="4 5">Associates with the tER membrane (PubMed:12876273). Localizes in developing Golgi stacks (PubMed:11514618).</text>
</comment>
<comment type="developmental stage">
    <text evidence="4 5">Detected in embryos and larvae (at protein level) (PubMed:12876273). Expressed in larval imaginal disks (at protein level) (PubMed:11514618).</text>
</comment>
<comment type="disruption phenotype">
    <text evidence="5">RNAi-mediated knockdown results in a loss of Golgi stacks and affects the organization of the transitional ER (tER) sites. Golgi stacks break down and form clusters of vesicles and tubules. The Golgi stacks that are present have an adherent morphology, including a decrease in stack diameter and total cisternae (stacked and single). The tER sites lose their organization and become dispersed throughout the cytoplasm. However, the efficiency of anterograde intracellular transport is not affected.</text>
</comment>
<comment type="similarity">
    <text evidence="6">Belongs to the VDP/USO1/EDE1 family.</text>
</comment>
<comment type="sequence caution" evidence="6">
    <conflict type="frameshift">
        <sequence resource="EMBL-CDS" id="CAB72935"/>
    </conflict>
</comment>
<organism evidence="10">
    <name type="scientific">Drosophila melanogaster</name>
    <name type="common">Fruit fly</name>
    <dbReference type="NCBI Taxonomy" id="7227"/>
    <lineage>
        <taxon>Eukaryota</taxon>
        <taxon>Metazoa</taxon>
        <taxon>Ecdysozoa</taxon>
        <taxon>Arthropoda</taxon>
        <taxon>Hexapoda</taxon>
        <taxon>Insecta</taxon>
        <taxon>Pterygota</taxon>
        <taxon>Neoptera</taxon>
        <taxon>Endopterygota</taxon>
        <taxon>Diptera</taxon>
        <taxon>Brachycera</taxon>
        <taxon>Muscomorpha</taxon>
        <taxon>Ephydroidea</taxon>
        <taxon>Drosophilidae</taxon>
        <taxon>Drosophila</taxon>
        <taxon>Sophophora</taxon>
    </lineage>
</organism>
<dbReference type="EMBL" id="AJ272048">
    <property type="protein sequence ID" value="CAB72935.1"/>
    <property type="status" value="ALT_FRAME"/>
    <property type="molecule type" value="mRNA"/>
</dbReference>
<dbReference type="EMBL" id="AE014298">
    <property type="protein sequence ID" value="AAF46286.2"/>
    <property type="molecule type" value="Genomic_DNA"/>
</dbReference>
<dbReference type="EMBL" id="AE014298">
    <property type="protein sequence ID" value="AHN59463.1"/>
    <property type="molecule type" value="Genomic_DNA"/>
</dbReference>
<dbReference type="EMBL" id="AY058751">
    <property type="protein sequence ID" value="AAL13980.1"/>
    <property type="molecule type" value="mRNA"/>
</dbReference>
<dbReference type="RefSeq" id="NP_001284992.1">
    <property type="nucleotide sequence ID" value="NM_001298063.1"/>
</dbReference>
<dbReference type="RefSeq" id="NP_572417.1">
    <property type="nucleotide sequence ID" value="NM_132189.3"/>
</dbReference>
<dbReference type="SMR" id="Q9W3N6"/>
<dbReference type="FunCoup" id="Q9W3N6">
    <property type="interactions" value="2131"/>
</dbReference>
<dbReference type="IntAct" id="Q9W3N6">
    <property type="interactions" value="5"/>
</dbReference>
<dbReference type="STRING" id="7227.FBpp0309148"/>
<dbReference type="GlyGen" id="Q9W3N6">
    <property type="glycosylation" value="1 site"/>
</dbReference>
<dbReference type="PaxDb" id="7227-FBpp0071045"/>
<dbReference type="DNASU" id="31698"/>
<dbReference type="EnsemblMetazoa" id="FBtr0071089">
    <property type="protein sequence ID" value="FBpp0071045"/>
    <property type="gene ID" value="FBgn0040087"/>
</dbReference>
<dbReference type="EnsemblMetazoa" id="FBtr0340162">
    <property type="protein sequence ID" value="FBpp0309148"/>
    <property type="gene ID" value="FBgn0040087"/>
</dbReference>
<dbReference type="GeneID" id="31698"/>
<dbReference type="KEGG" id="dme:Dmel_CG1422"/>
<dbReference type="UCSC" id="CG1422-RA">
    <property type="organism name" value="d. melanogaster"/>
</dbReference>
<dbReference type="AGR" id="FB:FBgn0040087"/>
<dbReference type="CTD" id="31698"/>
<dbReference type="FlyBase" id="FBgn0040087">
    <property type="gene designation" value="p115"/>
</dbReference>
<dbReference type="VEuPathDB" id="VectorBase:FBgn0040087"/>
<dbReference type="eggNOG" id="KOG0946">
    <property type="taxonomic scope" value="Eukaryota"/>
</dbReference>
<dbReference type="GeneTree" id="ENSGT00390000017018"/>
<dbReference type="HOGENOM" id="CLU_006318_2_0_1"/>
<dbReference type="InParanoid" id="Q9W3N6"/>
<dbReference type="OMA" id="GQETFCN"/>
<dbReference type="OrthoDB" id="198977at2759"/>
<dbReference type="PhylomeDB" id="Q9W3N6"/>
<dbReference type="Reactome" id="R-DME-204005">
    <property type="pathway name" value="COPII-mediated vesicle transport"/>
</dbReference>
<dbReference type="Reactome" id="R-DME-6807878">
    <property type="pathway name" value="COPI-mediated anterograde transport"/>
</dbReference>
<dbReference type="SignaLink" id="Q9W3N6"/>
<dbReference type="BioGRID-ORCS" id="31698">
    <property type="hits" value="0 hits in 1 CRISPR screen"/>
</dbReference>
<dbReference type="GenomeRNAi" id="31698"/>
<dbReference type="PRO" id="PR:Q9W3N6"/>
<dbReference type="Proteomes" id="UP000000803">
    <property type="component" value="Chromosome X"/>
</dbReference>
<dbReference type="Bgee" id="FBgn0040087">
    <property type="expression patterns" value="Expressed in eye disc (Drosophila) and 73 other cell types or tissues"/>
</dbReference>
<dbReference type="ExpressionAtlas" id="Q9W3N6">
    <property type="expression patterns" value="baseline and differential"/>
</dbReference>
<dbReference type="GO" id="GO:0005829">
    <property type="term" value="C:cytosol"/>
    <property type="evidence" value="ECO:0000314"/>
    <property type="project" value="FlyBase"/>
</dbReference>
<dbReference type="GO" id="GO:0005783">
    <property type="term" value="C:endoplasmic reticulum"/>
    <property type="evidence" value="ECO:0000314"/>
    <property type="project" value="FlyBase"/>
</dbReference>
<dbReference type="GO" id="GO:0005789">
    <property type="term" value="C:endoplasmic reticulum membrane"/>
    <property type="evidence" value="ECO:0007669"/>
    <property type="project" value="UniProtKB-SubCell"/>
</dbReference>
<dbReference type="GO" id="GO:0012507">
    <property type="term" value="C:ER to Golgi transport vesicle membrane"/>
    <property type="evidence" value="ECO:0000318"/>
    <property type="project" value="GO_Central"/>
</dbReference>
<dbReference type="GO" id="GO:0005794">
    <property type="term" value="C:Golgi apparatus"/>
    <property type="evidence" value="ECO:0000314"/>
    <property type="project" value="FlyBase"/>
</dbReference>
<dbReference type="GO" id="GO:0032580">
    <property type="term" value="C:Golgi cisterna membrane"/>
    <property type="evidence" value="ECO:0007669"/>
    <property type="project" value="UniProtKB-SubCell"/>
</dbReference>
<dbReference type="GO" id="GO:0000139">
    <property type="term" value="C:Golgi membrane"/>
    <property type="evidence" value="ECO:0007669"/>
    <property type="project" value="InterPro"/>
</dbReference>
<dbReference type="GO" id="GO:0005795">
    <property type="term" value="C:Golgi stack"/>
    <property type="evidence" value="ECO:0000314"/>
    <property type="project" value="FlyBase"/>
</dbReference>
<dbReference type="GO" id="GO:0006888">
    <property type="term" value="P:endoplasmic reticulum to Golgi vesicle-mediated transport"/>
    <property type="evidence" value="ECO:0000318"/>
    <property type="project" value="GO_Central"/>
</dbReference>
<dbReference type="GO" id="GO:0007030">
    <property type="term" value="P:Golgi organization"/>
    <property type="evidence" value="ECO:0000315"/>
    <property type="project" value="FlyBase"/>
</dbReference>
<dbReference type="GO" id="GO:0048211">
    <property type="term" value="P:Golgi vesicle docking"/>
    <property type="evidence" value="ECO:0000318"/>
    <property type="project" value="GO_Central"/>
</dbReference>
<dbReference type="GO" id="GO:0006886">
    <property type="term" value="P:intracellular protein transport"/>
    <property type="evidence" value="ECO:0000318"/>
    <property type="project" value="GO_Central"/>
</dbReference>
<dbReference type="GO" id="GO:0036098">
    <property type="term" value="P:male germ-line stem cell population maintenance"/>
    <property type="evidence" value="ECO:0000315"/>
    <property type="project" value="FlyBase"/>
</dbReference>
<dbReference type="GO" id="GO:0061025">
    <property type="term" value="P:membrane fusion"/>
    <property type="evidence" value="ECO:0000318"/>
    <property type="project" value="GO_Central"/>
</dbReference>
<dbReference type="GO" id="GO:0046427">
    <property type="term" value="P:positive regulation of receptor signaling pathway via JAK-STAT"/>
    <property type="evidence" value="ECO:0000316"/>
    <property type="project" value="FlyBase"/>
</dbReference>
<dbReference type="GO" id="GO:0010389">
    <property type="term" value="P:regulation of G2/M transition of mitotic cell cycle"/>
    <property type="evidence" value="ECO:0000315"/>
    <property type="project" value="FlyBase"/>
</dbReference>
<dbReference type="GO" id="GO:0044719">
    <property type="term" value="P:regulation of imaginal disc-derived wing size"/>
    <property type="evidence" value="ECO:0000315"/>
    <property type="project" value="FlyBase"/>
</dbReference>
<dbReference type="GO" id="GO:0045056">
    <property type="term" value="P:transcytosis"/>
    <property type="evidence" value="ECO:0000318"/>
    <property type="project" value="GO_Central"/>
</dbReference>
<dbReference type="GO" id="GO:0048280">
    <property type="term" value="P:vesicle fusion with Golgi apparatus"/>
    <property type="evidence" value="ECO:0007669"/>
    <property type="project" value="InterPro"/>
</dbReference>
<dbReference type="FunFam" id="1.25.10.10:FF:000394">
    <property type="entry name" value="general vesicular transport factor p115"/>
    <property type="match status" value="1"/>
</dbReference>
<dbReference type="Gene3D" id="1.25.10.10">
    <property type="entry name" value="Leucine-rich Repeat Variant"/>
    <property type="match status" value="1"/>
</dbReference>
<dbReference type="InterPro" id="IPR011989">
    <property type="entry name" value="ARM-like"/>
</dbReference>
<dbReference type="InterPro" id="IPR016024">
    <property type="entry name" value="ARM-type_fold"/>
</dbReference>
<dbReference type="InterPro" id="IPR000225">
    <property type="entry name" value="Armadillo"/>
</dbReference>
<dbReference type="InterPro" id="IPR041209">
    <property type="entry name" value="P115_Arm_rpt"/>
</dbReference>
<dbReference type="InterPro" id="IPR006955">
    <property type="entry name" value="Uso1_p115_C"/>
</dbReference>
<dbReference type="InterPro" id="IPR024095">
    <property type="entry name" value="Vesicle_P115"/>
</dbReference>
<dbReference type="InterPro" id="IPR006953">
    <property type="entry name" value="Vesicle_Uso1_P115_head"/>
</dbReference>
<dbReference type="PANTHER" id="PTHR10013">
    <property type="entry name" value="GENERAL VESICULAR TRANSPORT FACTOR P115"/>
    <property type="match status" value="1"/>
</dbReference>
<dbReference type="PANTHER" id="PTHR10013:SF0">
    <property type="entry name" value="GENERAL VESICULAR TRANSPORT FACTOR P115"/>
    <property type="match status" value="1"/>
</dbReference>
<dbReference type="Pfam" id="PF18770">
    <property type="entry name" value="Arm_vescicular"/>
    <property type="match status" value="1"/>
</dbReference>
<dbReference type="Pfam" id="PF04871">
    <property type="entry name" value="Uso1_p115_C"/>
    <property type="match status" value="1"/>
</dbReference>
<dbReference type="Pfam" id="PF04869">
    <property type="entry name" value="Uso1_p115_head"/>
    <property type="match status" value="1"/>
</dbReference>
<dbReference type="SMART" id="SM00185">
    <property type="entry name" value="ARM"/>
    <property type="match status" value="2"/>
</dbReference>
<dbReference type="SUPFAM" id="SSF48371">
    <property type="entry name" value="ARM repeat"/>
    <property type="match status" value="1"/>
</dbReference>
<dbReference type="PROSITE" id="PS50176">
    <property type="entry name" value="ARM_REPEAT"/>
    <property type="match status" value="1"/>
</dbReference>
<protein>
    <recommendedName>
        <fullName evidence="6">General vesicular transport factor p115</fullName>
    </recommendedName>
</protein>
<feature type="chain" id="PRO_0000439489" description="General vesicular transport factor p115" evidence="6">
    <location>
        <begin position="1"/>
        <end position="836"/>
    </location>
</feature>
<feature type="repeat" description="ARM 1" evidence="1">
    <location>
        <begin position="24"/>
        <end position="64"/>
    </location>
</feature>
<feature type="repeat" description="ARM 2" evidence="1">
    <location>
        <begin position="65"/>
        <end position="124"/>
    </location>
</feature>
<feature type="repeat" description="ARM 3" evidence="1">
    <location>
        <begin position="126"/>
        <end position="166"/>
    </location>
</feature>
<feature type="repeat" description="ARM 4" evidence="1">
    <location>
        <begin position="169"/>
        <end position="210"/>
    </location>
</feature>
<feature type="repeat" description="ARM 5" evidence="1">
    <location>
        <begin position="211"/>
        <end position="256"/>
    </location>
</feature>
<feature type="repeat" description="ARM 7" evidence="1">
    <location>
        <begin position="316"/>
        <end position="359"/>
    </location>
</feature>
<feature type="repeat" description="ARM 8" evidence="1">
    <location>
        <begin position="368"/>
        <end position="413"/>
    </location>
</feature>
<feature type="repeat" description="ARM 9" evidence="1">
    <location>
        <begin position="424"/>
        <end position="463"/>
    </location>
</feature>
<feature type="repeat" description="ARM 10" evidence="1">
    <location>
        <begin position="477"/>
        <end position="518"/>
    </location>
</feature>
<feature type="repeat" description="ARM 11" evidence="1">
    <location>
        <begin position="523"/>
        <end position="577"/>
    </location>
</feature>
<feature type="repeat" description="ARM 12" evidence="1">
    <location>
        <begin position="579"/>
        <end position="636"/>
    </location>
</feature>
<feature type="region of interest" description="Disordered" evidence="3">
    <location>
        <begin position="1"/>
        <end position="22"/>
    </location>
</feature>
<feature type="region of interest" description="Disordered" evidence="3">
    <location>
        <begin position="803"/>
        <end position="836"/>
    </location>
</feature>
<feature type="coiled-coil region" evidence="2">
    <location>
        <begin position="663"/>
        <end position="707"/>
    </location>
</feature>
<feature type="coiled-coil region" evidence="2">
    <location>
        <begin position="744"/>
        <end position="806"/>
    </location>
</feature>
<feature type="compositionally biased region" description="Polar residues" evidence="3">
    <location>
        <begin position="12"/>
        <end position="22"/>
    </location>
</feature>
<feature type="compositionally biased region" description="Polar residues" evidence="3">
    <location>
        <begin position="806"/>
        <end position="816"/>
    </location>
</feature>
<feature type="compositionally biased region" description="Low complexity" evidence="3">
    <location>
        <begin position="817"/>
        <end position="836"/>
    </location>
</feature>
<feature type="sequence conflict" description="In Ref. 1; CAB72935." evidence="6" ref="1">
    <original>N</original>
    <variation>D</variation>
    <location>
        <position position="455"/>
    </location>
</feature>
<feature type="sequence conflict" description="In Ref. 1; CAB72935." evidence="6" ref="1">
    <original>A</original>
    <variation>P</variation>
    <location>
        <position position="508"/>
    </location>
</feature>